<proteinExistence type="inferred from homology"/>
<feature type="chain" id="PRO_1000024435" description="tRNA N6-adenosine threonylcarbamoyltransferase">
    <location>
        <begin position="1"/>
        <end position="336"/>
    </location>
</feature>
<feature type="binding site" evidence="1">
    <location>
        <position position="112"/>
    </location>
    <ligand>
        <name>Fe cation</name>
        <dbReference type="ChEBI" id="CHEBI:24875"/>
    </ligand>
</feature>
<feature type="binding site" evidence="1">
    <location>
        <position position="116"/>
    </location>
    <ligand>
        <name>Fe cation</name>
        <dbReference type="ChEBI" id="CHEBI:24875"/>
    </ligand>
</feature>
<feature type="binding site" evidence="1">
    <location>
        <begin position="136"/>
        <end position="140"/>
    </location>
    <ligand>
        <name>substrate</name>
    </ligand>
</feature>
<feature type="binding site" evidence="1">
    <location>
        <position position="169"/>
    </location>
    <ligand>
        <name>substrate</name>
    </ligand>
</feature>
<feature type="binding site" evidence="1">
    <location>
        <position position="182"/>
    </location>
    <ligand>
        <name>substrate</name>
    </ligand>
</feature>
<feature type="binding site" evidence="1">
    <location>
        <position position="276"/>
    </location>
    <ligand>
        <name>substrate</name>
    </ligand>
</feature>
<feature type="binding site" evidence="1">
    <location>
        <position position="304"/>
    </location>
    <ligand>
        <name>Fe cation</name>
        <dbReference type="ChEBI" id="CHEBI:24875"/>
    </ligand>
</feature>
<dbReference type="EC" id="2.3.1.234" evidence="1"/>
<dbReference type="EMBL" id="CP000803">
    <property type="protein sequence ID" value="ABU62319.1"/>
    <property type="molecule type" value="Genomic_DNA"/>
</dbReference>
<dbReference type="RefSeq" id="WP_010032722.1">
    <property type="nucleotide sequence ID" value="NC_009749.1"/>
</dbReference>
<dbReference type="SMR" id="A7NEB6"/>
<dbReference type="KEGG" id="fta:FTA_1844"/>
<dbReference type="HOGENOM" id="CLU_023208_0_0_6"/>
<dbReference type="GO" id="GO:0005737">
    <property type="term" value="C:cytoplasm"/>
    <property type="evidence" value="ECO:0007669"/>
    <property type="project" value="UniProtKB-SubCell"/>
</dbReference>
<dbReference type="GO" id="GO:0005506">
    <property type="term" value="F:iron ion binding"/>
    <property type="evidence" value="ECO:0007669"/>
    <property type="project" value="UniProtKB-UniRule"/>
</dbReference>
<dbReference type="GO" id="GO:0061711">
    <property type="term" value="F:N(6)-L-threonylcarbamoyladenine synthase activity"/>
    <property type="evidence" value="ECO:0007669"/>
    <property type="project" value="UniProtKB-EC"/>
</dbReference>
<dbReference type="GO" id="GO:0002949">
    <property type="term" value="P:tRNA threonylcarbamoyladenosine modification"/>
    <property type="evidence" value="ECO:0007669"/>
    <property type="project" value="UniProtKB-UniRule"/>
</dbReference>
<dbReference type="CDD" id="cd24133">
    <property type="entry name" value="ASKHA_NBD_TsaD_bac"/>
    <property type="match status" value="1"/>
</dbReference>
<dbReference type="FunFam" id="3.30.420.40:FF:000012">
    <property type="entry name" value="tRNA N6-adenosine threonylcarbamoyltransferase"/>
    <property type="match status" value="1"/>
</dbReference>
<dbReference type="FunFam" id="3.30.420.40:FF:000040">
    <property type="entry name" value="tRNA N6-adenosine threonylcarbamoyltransferase"/>
    <property type="match status" value="1"/>
</dbReference>
<dbReference type="Gene3D" id="3.30.420.40">
    <property type="match status" value="2"/>
</dbReference>
<dbReference type="HAMAP" id="MF_01445">
    <property type="entry name" value="TsaD"/>
    <property type="match status" value="1"/>
</dbReference>
<dbReference type="InterPro" id="IPR043129">
    <property type="entry name" value="ATPase_NBD"/>
</dbReference>
<dbReference type="InterPro" id="IPR000905">
    <property type="entry name" value="Gcp-like_dom"/>
</dbReference>
<dbReference type="InterPro" id="IPR017861">
    <property type="entry name" value="KAE1/TsaD"/>
</dbReference>
<dbReference type="InterPro" id="IPR022450">
    <property type="entry name" value="TsaD"/>
</dbReference>
<dbReference type="NCBIfam" id="TIGR00329">
    <property type="entry name" value="gcp_kae1"/>
    <property type="match status" value="1"/>
</dbReference>
<dbReference type="NCBIfam" id="TIGR03723">
    <property type="entry name" value="T6A_TsaD_YgjD"/>
    <property type="match status" value="1"/>
</dbReference>
<dbReference type="PANTHER" id="PTHR11735">
    <property type="entry name" value="TRNA N6-ADENOSINE THREONYLCARBAMOYLTRANSFERASE"/>
    <property type="match status" value="1"/>
</dbReference>
<dbReference type="PANTHER" id="PTHR11735:SF6">
    <property type="entry name" value="TRNA N6-ADENOSINE THREONYLCARBAMOYLTRANSFERASE, MITOCHONDRIAL"/>
    <property type="match status" value="1"/>
</dbReference>
<dbReference type="Pfam" id="PF00814">
    <property type="entry name" value="TsaD"/>
    <property type="match status" value="1"/>
</dbReference>
<dbReference type="PRINTS" id="PR00789">
    <property type="entry name" value="OSIALOPTASE"/>
</dbReference>
<dbReference type="SUPFAM" id="SSF53067">
    <property type="entry name" value="Actin-like ATPase domain"/>
    <property type="match status" value="2"/>
</dbReference>
<protein>
    <recommendedName>
        <fullName evidence="1">tRNA N6-adenosine threonylcarbamoyltransferase</fullName>
        <ecNumber evidence="1">2.3.1.234</ecNumber>
    </recommendedName>
    <alternativeName>
        <fullName evidence="1">N6-L-threonylcarbamoyladenine synthase</fullName>
        <shortName evidence="1">t(6)A synthase</shortName>
    </alternativeName>
    <alternativeName>
        <fullName evidence="1">t(6)A37 threonylcarbamoyladenosine biosynthesis protein TsaD</fullName>
    </alternativeName>
    <alternativeName>
        <fullName evidence="1">tRNA threonylcarbamoyladenosine biosynthesis protein TsaD</fullName>
    </alternativeName>
</protein>
<evidence type="ECO:0000255" key="1">
    <source>
        <dbReference type="HAMAP-Rule" id="MF_01445"/>
    </source>
</evidence>
<sequence length="336" mass="36897">MIVLGIESSCDETGLAIYDYSKKKLIADELYSQVKLHKKYGGVVPELASREHIAKLNLLAKKIFKETGLSFEDIDCIAYTAMPGLVGALMVGATFAKTLGLIHNIDTIAVHHLEGHLLSPLLDHNSNIEYPFVALLVSGGHTQLFEVKEFGEYSLLGESIDDAAGEAFDKTTKLLGMGYPGGVEVANLADQATDKSKYILPRPMKNKPNLDFSFSGLKTAVLNTWYDEQDQSLENKANLCYALQNAAIDVLVSKCAKALQKTKNTRLVISGGVSANKLLRHQLDLLAKNREYQIFFPPMKYCTDNGAMIALAGAYRYVNGFKDSNLEINVKARSPL</sequence>
<keyword id="KW-0012">Acyltransferase</keyword>
<keyword id="KW-0963">Cytoplasm</keyword>
<keyword id="KW-0408">Iron</keyword>
<keyword id="KW-0479">Metal-binding</keyword>
<keyword id="KW-0808">Transferase</keyword>
<keyword id="KW-0819">tRNA processing</keyword>
<gene>
    <name evidence="1" type="primary">tsaD</name>
    <name type="synonym">gcp</name>
    <name type="ordered locus">FTA_1844</name>
</gene>
<organism>
    <name type="scientific">Francisella tularensis subsp. holarctica (strain FTNF002-00 / FTA)</name>
    <dbReference type="NCBI Taxonomy" id="458234"/>
    <lineage>
        <taxon>Bacteria</taxon>
        <taxon>Pseudomonadati</taxon>
        <taxon>Pseudomonadota</taxon>
        <taxon>Gammaproteobacteria</taxon>
        <taxon>Thiotrichales</taxon>
        <taxon>Francisellaceae</taxon>
        <taxon>Francisella</taxon>
    </lineage>
</organism>
<accession>A7NEB6</accession>
<reference key="1">
    <citation type="journal article" date="2009" name="PLoS ONE">
        <title>Complete genome sequence of Francisella tularensis subspecies holarctica FTNF002-00.</title>
        <authorList>
            <person name="Barabote R.D."/>
            <person name="Xie G."/>
            <person name="Brettin T.S."/>
            <person name="Hinrichs S.H."/>
            <person name="Fey P.D."/>
            <person name="Jay J.J."/>
            <person name="Engle J.L."/>
            <person name="Godbole S.D."/>
            <person name="Noronha J.M."/>
            <person name="Scheuermann R.H."/>
            <person name="Zhou L.W."/>
            <person name="Lion C."/>
            <person name="Dempsey M.P."/>
        </authorList>
    </citation>
    <scope>NUCLEOTIDE SEQUENCE [LARGE SCALE GENOMIC DNA]</scope>
    <source>
        <strain>FTNF002-00 / FTA</strain>
    </source>
</reference>
<comment type="function">
    <text evidence="1">Required for the formation of a threonylcarbamoyl group on adenosine at position 37 (t(6)A37) in tRNAs that read codons beginning with adenine. Is involved in the transfer of the threonylcarbamoyl moiety of threonylcarbamoyl-AMP (TC-AMP) to the N6 group of A37, together with TsaE and TsaB. TsaD likely plays a direct catalytic role in this reaction.</text>
</comment>
<comment type="catalytic activity">
    <reaction evidence="1">
        <text>L-threonylcarbamoyladenylate + adenosine(37) in tRNA = N(6)-L-threonylcarbamoyladenosine(37) in tRNA + AMP + H(+)</text>
        <dbReference type="Rhea" id="RHEA:37059"/>
        <dbReference type="Rhea" id="RHEA-COMP:10162"/>
        <dbReference type="Rhea" id="RHEA-COMP:10163"/>
        <dbReference type="ChEBI" id="CHEBI:15378"/>
        <dbReference type="ChEBI" id="CHEBI:73682"/>
        <dbReference type="ChEBI" id="CHEBI:74411"/>
        <dbReference type="ChEBI" id="CHEBI:74418"/>
        <dbReference type="ChEBI" id="CHEBI:456215"/>
        <dbReference type="EC" id="2.3.1.234"/>
    </reaction>
</comment>
<comment type="cofactor">
    <cofactor evidence="1">
        <name>Fe(2+)</name>
        <dbReference type="ChEBI" id="CHEBI:29033"/>
    </cofactor>
    <text evidence="1">Binds 1 Fe(2+) ion per subunit.</text>
</comment>
<comment type="subcellular location">
    <subcellularLocation>
        <location evidence="1">Cytoplasm</location>
    </subcellularLocation>
</comment>
<comment type="similarity">
    <text evidence="1">Belongs to the KAE1 / TsaD family.</text>
</comment>
<name>TSAD_FRATF</name>